<comment type="function">
    <text evidence="1 3">Probable neurotoxin with ion channel inhibitor activity (Probable). In vivo, elicits dose-dependently excitatory activity upon injection into fish. Its action is slowly reversible (PubMed:17118419).</text>
</comment>
<comment type="subcellular location">
    <subcellularLocation>
        <location evidence="1">Secreted</location>
    </subcellularLocation>
</comment>
<comment type="tissue specificity">
    <text evidence="4">Expressed by the venom duct.</text>
</comment>
<comment type="domain">
    <text evidence="3">The cysteine framework is IV (CC-C-C-C-C).</text>
</comment>
<comment type="mass spectrometry"/>
<comment type="miscellaneous">
    <text evidence="1">Negatives results: does not have any direct effects on neuromuscular nAChRs (human adult alpha-1/beta-1/epsilon/delta or fetal alpha-1/beta-1/gamma/delta receptors). Does not have any effects on human Kv1 (KCNA1, KCNA2, KCNA3, KCNA4, KCNA5, and KCNA), Kv2.1/KCNB1, Kv3.4 (KCNC4), Kv4.2 (KCND2), KCNQ2/3, and on the Drosophilia Shaker potassium channels. Does not have effects on the fish potassium channels, TSha1, TSha2 (Kv1 homologs), and Traw (Kv3 homolog).</text>
</comment>
<comment type="similarity">
    <text evidence="3">Belongs to the conotoxin A superfamily.</text>
</comment>
<sequence>DCCGVKLEMCHPCLCDNSCKNYGK</sequence>
<feature type="peptide" id="PRO_0000273427" description="Conotoxin PIVE" evidence="1">
    <location>
        <begin position="1"/>
        <end position="24"/>
    </location>
</feature>
<feature type="modified residue" description="Lysine amide" evidence="1">
    <location>
        <position position="24"/>
    </location>
</feature>
<feature type="disulfide bond" evidence="1">
    <location>
        <begin position="2"/>
        <end position="10"/>
    </location>
</feature>
<feature type="disulfide bond" evidence="1">
    <location>
        <begin position="3"/>
        <end position="15"/>
    </location>
</feature>
<feature type="disulfide bond" evidence="1">
    <location>
        <begin position="13"/>
        <end position="19"/>
    </location>
</feature>
<organism>
    <name type="scientific">Conus purpurascens</name>
    <name type="common">Purple cone</name>
    <dbReference type="NCBI Taxonomy" id="41690"/>
    <lineage>
        <taxon>Eukaryota</taxon>
        <taxon>Metazoa</taxon>
        <taxon>Spiralia</taxon>
        <taxon>Lophotrochozoa</taxon>
        <taxon>Mollusca</taxon>
        <taxon>Gastropoda</taxon>
        <taxon>Caenogastropoda</taxon>
        <taxon>Neogastropoda</taxon>
        <taxon>Conoidea</taxon>
        <taxon>Conidae</taxon>
        <taxon>Conus</taxon>
        <taxon>Chelyconus</taxon>
    </lineage>
</organism>
<dbReference type="TCDB" id="8.B.32.2.5">
    <property type="family name" value="the nicotinic acetylcholine receptor-targeting alpha-conotoxin (a-conotoxin) family"/>
</dbReference>
<dbReference type="ConoServer" id="1670">
    <property type="toxin name" value="PIVE"/>
</dbReference>
<dbReference type="GO" id="GO:0005576">
    <property type="term" value="C:extracellular region"/>
    <property type="evidence" value="ECO:0007669"/>
    <property type="project" value="UniProtKB-SubCell"/>
</dbReference>
<dbReference type="GO" id="GO:0099106">
    <property type="term" value="F:ion channel regulator activity"/>
    <property type="evidence" value="ECO:0007669"/>
    <property type="project" value="UniProtKB-KW"/>
</dbReference>
<dbReference type="GO" id="GO:0090729">
    <property type="term" value="F:toxin activity"/>
    <property type="evidence" value="ECO:0007669"/>
    <property type="project" value="UniProtKB-KW"/>
</dbReference>
<proteinExistence type="evidence at protein level"/>
<keyword id="KW-0027">Amidation</keyword>
<keyword id="KW-0903">Direct protein sequencing</keyword>
<keyword id="KW-1015">Disulfide bond</keyword>
<keyword id="KW-0872">Ion channel impairing toxin</keyword>
<keyword id="KW-0528">Neurotoxin</keyword>
<keyword id="KW-0964">Secreted</keyword>
<keyword id="KW-0800">Toxin</keyword>
<name>CA4E_CONPU</name>
<reference key="1">
    <citation type="journal article" date="2007" name="Toxicon">
        <title>Discovery and characterization of the short kappaA-conotoxins: a novel subfamily of excitatory conotoxins.</title>
        <authorList>
            <person name="Teichert R.W."/>
            <person name="Jacobsen R."/>
            <person name="Terlau H."/>
            <person name="Yoshikami D."/>
            <person name="Olivera B.M."/>
        </authorList>
    </citation>
    <scope>PROTEIN SEQUENCE</scope>
    <scope>SYNTHESIS</scope>
    <scope>FUNCTION</scope>
    <scope>DISULFIDE BONDS</scope>
    <scope>AMIDATION AT LYS-24</scope>
    <scope>MASS SPECTROMETRY</scope>
    <scope>SUBCELLULAR LOCATION</scope>
    <source>
        <tissue>Venom</tissue>
    </source>
</reference>
<protein>
    <recommendedName>
        <fullName evidence="2">Conotoxin PIVE</fullName>
    </recommendedName>
    <alternativeName>
        <fullName evidence="2">Kappa-A-conotoxin PIVE</fullName>
        <shortName evidence="2">KappaA-PIVE</shortName>
    </alternativeName>
</protein>
<evidence type="ECO:0000269" key="1">
    <source>
    </source>
</evidence>
<evidence type="ECO:0000303" key="2">
    <source>
    </source>
</evidence>
<evidence type="ECO:0000305" key="3"/>
<evidence type="ECO:0000305" key="4">
    <source>
    </source>
</evidence>
<accession>P0C2C5</accession>